<feature type="chain" id="PRO_0000357988" description="NAD(P)H-quinone oxidoreductase subunit H, chloroplastic">
    <location>
        <begin position="1"/>
        <end position="393"/>
    </location>
</feature>
<dbReference type="EC" id="7.1.1.-" evidence="1"/>
<dbReference type="EMBL" id="AY780259">
    <property type="protein sequence ID" value="AAX21084.1"/>
    <property type="molecule type" value="Genomic_DNA"/>
</dbReference>
<dbReference type="RefSeq" id="YP_636355.1">
    <property type="nucleotide sequence ID" value="NC_008115.1"/>
</dbReference>
<dbReference type="SMR" id="Q49KU2"/>
<dbReference type="GeneID" id="4108436"/>
<dbReference type="GO" id="GO:0009535">
    <property type="term" value="C:chloroplast thylakoid membrane"/>
    <property type="evidence" value="ECO:0007669"/>
    <property type="project" value="UniProtKB-SubCell"/>
</dbReference>
<dbReference type="GO" id="GO:0051287">
    <property type="term" value="F:NAD binding"/>
    <property type="evidence" value="ECO:0007669"/>
    <property type="project" value="InterPro"/>
</dbReference>
<dbReference type="GO" id="GO:0016655">
    <property type="term" value="F:oxidoreductase activity, acting on NAD(P)H, quinone or similar compound as acceptor"/>
    <property type="evidence" value="ECO:0007669"/>
    <property type="project" value="UniProtKB-UniRule"/>
</dbReference>
<dbReference type="GO" id="GO:0048038">
    <property type="term" value="F:quinone binding"/>
    <property type="evidence" value="ECO:0007669"/>
    <property type="project" value="UniProtKB-KW"/>
</dbReference>
<dbReference type="GO" id="GO:0019684">
    <property type="term" value="P:photosynthesis, light reaction"/>
    <property type="evidence" value="ECO:0007669"/>
    <property type="project" value="UniProtKB-UniRule"/>
</dbReference>
<dbReference type="FunFam" id="1.10.645.10:FF:000003">
    <property type="entry name" value="NAD(P)H-quinone oxidoreductase subunit H, chloroplastic"/>
    <property type="match status" value="1"/>
</dbReference>
<dbReference type="Gene3D" id="1.10.645.10">
    <property type="entry name" value="Cytochrome-c3 Hydrogenase, chain B"/>
    <property type="match status" value="1"/>
</dbReference>
<dbReference type="HAMAP" id="MF_01358">
    <property type="entry name" value="NDH1_NuoD"/>
    <property type="match status" value="1"/>
</dbReference>
<dbReference type="InterPro" id="IPR001135">
    <property type="entry name" value="NADH_Q_OxRdtase_suD"/>
</dbReference>
<dbReference type="InterPro" id="IPR014029">
    <property type="entry name" value="NADH_UbQ_OxRdtase_49kDa_CS"/>
</dbReference>
<dbReference type="InterPro" id="IPR022885">
    <property type="entry name" value="NDH1_su_D/H"/>
</dbReference>
<dbReference type="InterPro" id="IPR029014">
    <property type="entry name" value="NiFe-Hase_large"/>
</dbReference>
<dbReference type="NCBIfam" id="NF004739">
    <property type="entry name" value="PRK06075.1"/>
    <property type="match status" value="1"/>
</dbReference>
<dbReference type="NCBIfam" id="NF005649">
    <property type="entry name" value="PRK07415.1"/>
    <property type="match status" value="1"/>
</dbReference>
<dbReference type="PANTHER" id="PTHR11993:SF10">
    <property type="entry name" value="NADH DEHYDROGENASE [UBIQUINONE] IRON-SULFUR PROTEIN 2, MITOCHONDRIAL"/>
    <property type="match status" value="1"/>
</dbReference>
<dbReference type="PANTHER" id="PTHR11993">
    <property type="entry name" value="NADH-UBIQUINONE OXIDOREDUCTASE 49 KDA SUBUNIT"/>
    <property type="match status" value="1"/>
</dbReference>
<dbReference type="Pfam" id="PF00346">
    <property type="entry name" value="Complex1_49kDa"/>
    <property type="match status" value="1"/>
</dbReference>
<dbReference type="SUPFAM" id="SSF56762">
    <property type="entry name" value="HydB/Nqo4-like"/>
    <property type="match status" value="1"/>
</dbReference>
<dbReference type="PROSITE" id="PS00535">
    <property type="entry name" value="COMPLEX1_49K"/>
    <property type="match status" value="1"/>
</dbReference>
<protein>
    <recommendedName>
        <fullName evidence="1">NAD(P)H-quinone oxidoreductase subunit H, chloroplastic</fullName>
        <ecNumber evidence="1">7.1.1.-</ecNumber>
    </recommendedName>
    <alternativeName>
        <fullName>NAD(P)H dehydrogenase subunit H</fullName>
    </alternativeName>
    <alternativeName>
        <fullName evidence="1">NADH-plastoquinone oxidoreductase 49 kDa subunit</fullName>
    </alternativeName>
    <alternativeName>
        <fullName evidence="1">NADH-plastoquinone oxidoreductase subunit H</fullName>
    </alternativeName>
</protein>
<gene>
    <name evidence="1" type="primary">ndhH</name>
</gene>
<keyword id="KW-0150">Chloroplast</keyword>
<keyword id="KW-0472">Membrane</keyword>
<keyword id="KW-0520">NAD</keyword>
<keyword id="KW-0521">NADP</keyword>
<keyword id="KW-0934">Plastid</keyword>
<keyword id="KW-0618">Plastoquinone</keyword>
<keyword id="KW-0874">Quinone</keyword>
<keyword id="KW-0793">Thylakoid</keyword>
<keyword id="KW-1278">Translocase</keyword>
<keyword id="KW-0813">Transport</keyword>
<organism>
    <name type="scientific">Eucalyptus globulus subsp. globulus</name>
    <name type="common">Tasmanian blue gum</name>
    <dbReference type="NCBI Taxonomy" id="71271"/>
    <lineage>
        <taxon>Eukaryota</taxon>
        <taxon>Viridiplantae</taxon>
        <taxon>Streptophyta</taxon>
        <taxon>Embryophyta</taxon>
        <taxon>Tracheophyta</taxon>
        <taxon>Spermatophyta</taxon>
        <taxon>Magnoliopsida</taxon>
        <taxon>eudicotyledons</taxon>
        <taxon>Gunneridae</taxon>
        <taxon>Pentapetalae</taxon>
        <taxon>rosids</taxon>
        <taxon>malvids</taxon>
        <taxon>Myrtales</taxon>
        <taxon>Myrtaceae</taxon>
        <taxon>Myrtoideae</taxon>
        <taxon>Eucalypteae</taxon>
        <taxon>Eucalyptus</taxon>
    </lineage>
</organism>
<proteinExistence type="inferred from homology"/>
<reference key="1">
    <citation type="journal article" date="2005" name="DNA Res.">
        <title>Complete nucleotide sequence of the chloroplast genome from the Tasmanian blue gum, Eucalyptus globulus (Myrtaceae).</title>
        <authorList>
            <person name="Steane D.A."/>
        </authorList>
    </citation>
    <scope>NUCLEOTIDE SEQUENCE [LARGE SCALE GENOMIC DNA]</scope>
</reference>
<accession>Q49KU2</accession>
<sequence>MNVTTTRKDLMIVNMGPHHPSMHGVLRLILTLDGEDVIDCEPILGYLHRGMEKIAENRTVIQYLPYVTRWDYLATMFTEAITVNGPEQLGNIQVPKRASYIRVIMLELSRIASHLLWLGPFMADIGAQTPFFYIFRERELVYDLFEAATGMRMMHNYFRIGGVAADLPYGWIDKCLDFCDYFLTAVSEYQKLITRNPIFLERVEGVGIIGPEEAINWGLSGPMLRASGIQWDLRKVDHYECYDELDWEIFWQKEGDSLARYLVRIGEMRESIKIIQQALEGIPGGPYENLETRCFARERDPEWNDFEYRFISKKPSPTFELPKQELYVRVEAPKGELGIFLIGDQSGFPWRWKIRPPGFINLQILPQLVKRMKLADIMTILGSIDIIMGEVDR</sequence>
<name>NDHH_EUCGG</name>
<geneLocation type="chloroplast"/>
<comment type="function">
    <text evidence="1">NDH shuttles electrons from NAD(P)H:plastoquinone, via FMN and iron-sulfur (Fe-S) centers, to quinones in the photosynthetic chain and possibly in a chloroplast respiratory chain. The immediate electron acceptor for the enzyme in this species is believed to be plastoquinone. Couples the redox reaction to proton translocation, and thus conserves the redox energy in a proton gradient.</text>
</comment>
<comment type="catalytic activity">
    <reaction evidence="1">
        <text>a plastoquinone + NADH + (n+1) H(+)(in) = a plastoquinol + NAD(+) + n H(+)(out)</text>
        <dbReference type="Rhea" id="RHEA:42608"/>
        <dbReference type="Rhea" id="RHEA-COMP:9561"/>
        <dbReference type="Rhea" id="RHEA-COMP:9562"/>
        <dbReference type="ChEBI" id="CHEBI:15378"/>
        <dbReference type="ChEBI" id="CHEBI:17757"/>
        <dbReference type="ChEBI" id="CHEBI:57540"/>
        <dbReference type="ChEBI" id="CHEBI:57945"/>
        <dbReference type="ChEBI" id="CHEBI:62192"/>
    </reaction>
</comment>
<comment type="catalytic activity">
    <reaction evidence="1">
        <text>a plastoquinone + NADPH + (n+1) H(+)(in) = a plastoquinol + NADP(+) + n H(+)(out)</text>
        <dbReference type="Rhea" id="RHEA:42612"/>
        <dbReference type="Rhea" id="RHEA-COMP:9561"/>
        <dbReference type="Rhea" id="RHEA-COMP:9562"/>
        <dbReference type="ChEBI" id="CHEBI:15378"/>
        <dbReference type="ChEBI" id="CHEBI:17757"/>
        <dbReference type="ChEBI" id="CHEBI:57783"/>
        <dbReference type="ChEBI" id="CHEBI:58349"/>
        <dbReference type="ChEBI" id="CHEBI:62192"/>
    </reaction>
</comment>
<comment type="subunit">
    <text evidence="1">NDH is composed of at least 16 different subunits, 5 of which are encoded in the nucleus.</text>
</comment>
<comment type="subcellular location">
    <subcellularLocation>
        <location evidence="1">Plastid</location>
        <location evidence="1">Chloroplast thylakoid membrane</location>
        <topology evidence="1">Peripheral membrane protein</topology>
        <orientation evidence="1">Stromal side</orientation>
    </subcellularLocation>
</comment>
<comment type="similarity">
    <text evidence="1">Belongs to the complex I 49 kDa subunit family.</text>
</comment>
<evidence type="ECO:0000255" key="1">
    <source>
        <dbReference type="HAMAP-Rule" id="MF_01358"/>
    </source>
</evidence>